<organism>
    <name type="scientific">Shigella flexneri serotype 5b (strain 8401)</name>
    <dbReference type="NCBI Taxonomy" id="373384"/>
    <lineage>
        <taxon>Bacteria</taxon>
        <taxon>Pseudomonadati</taxon>
        <taxon>Pseudomonadota</taxon>
        <taxon>Gammaproteobacteria</taxon>
        <taxon>Enterobacterales</taxon>
        <taxon>Enterobacteriaceae</taxon>
        <taxon>Shigella</taxon>
    </lineage>
</organism>
<comment type="function">
    <text evidence="1">Redox regulated molecular chaperone. Protects both thermally unfolding and oxidatively damaged proteins from irreversible aggregation. Plays an important role in the bacterial defense system toward oxidative stress.</text>
</comment>
<comment type="subcellular location">
    <subcellularLocation>
        <location evidence="1">Cytoplasm</location>
    </subcellularLocation>
</comment>
<comment type="PTM">
    <text evidence="1">Under oxidizing conditions two disulfide bonds are formed involving the reactive cysteines. Under reducing conditions zinc is bound to the reactive cysteines and the protein is inactive.</text>
</comment>
<comment type="similarity">
    <text evidence="1">Belongs to the HSP33 family.</text>
</comment>
<feature type="chain" id="PRO_1000015573" description="33 kDa chaperonin">
    <location>
        <begin position="1"/>
        <end position="289"/>
    </location>
</feature>
<feature type="disulfide bond" description="Redox-active" evidence="1">
    <location>
        <begin position="230"/>
        <end position="232"/>
    </location>
</feature>
<feature type="disulfide bond" description="Redox-active" evidence="1">
    <location>
        <begin position="263"/>
        <end position="266"/>
    </location>
</feature>
<accession>Q0SZR7</accession>
<protein>
    <recommendedName>
        <fullName evidence="1">33 kDa chaperonin</fullName>
    </recommendedName>
    <alternativeName>
        <fullName evidence="1">Heat shock protein 33 homolog</fullName>
        <shortName evidence="1">HSP33</shortName>
    </alternativeName>
</protein>
<gene>
    <name evidence="1" type="primary">hslO</name>
    <name type="ordered locus">SFV_3406</name>
</gene>
<name>HSLO_SHIF8</name>
<reference key="1">
    <citation type="journal article" date="2006" name="BMC Genomics">
        <title>Complete genome sequence of Shigella flexneri 5b and comparison with Shigella flexneri 2a.</title>
        <authorList>
            <person name="Nie H."/>
            <person name="Yang F."/>
            <person name="Zhang X."/>
            <person name="Yang J."/>
            <person name="Chen L."/>
            <person name="Wang J."/>
            <person name="Xiong Z."/>
            <person name="Peng J."/>
            <person name="Sun L."/>
            <person name="Dong J."/>
            <person name="Xue Y."/>
            <person name="Xu X."/>
            <person name="Chen S."/>
            <person name="Yao Z."/>
            <person name="Shen Y."/>
            <person name="Jin Q."/>
        </authorList>
    </citation>
    <scope>NUCLEOTIDE SEQUENCE [LARGE SCALE GENOMIC DNA]</scope>
    <source>
        <strain>8401</strain>
    </source>
</reference>
<evidence type="ECO:0000255" key="1">
    <source>
        <dbReference type="HAMAP-Rule" id="MF_00117"/>
    </source>
</evidence>
<proteinExistence type="inferred from homology"/>
<sequence>MPQHDQLHRYLFENFAVRGELVTVSETLQQILENHDYPQPVKNVLAELLVATSLLTATLKFDGDITVQLQGDGPMNLAVINGNNNQQMRGVARVQGEIPENADLKTLVGNGYVVITITPSEGERYQGVVGLEGDTLAACLEDYFMRSEQLPTRLFIRTGDVDGKPAAGGMLLQVMPAQNTQQDDFDHLATLTETIKTEELLTLPANEVLWRLYHEEEVTVYDPQDVEFKCTCSRERCADALKTLPDEEVDSILAEDGEIDMHCDYCGNHYLFNAMDIAEIRNNASPADP</sequence>
<keyword id="KW-0143">Chaperone</keyword>
<keyword id="KW-0963">Cytoplasm</keyword>
<keyword id="KW-1015">Disulfide bond</keyword>
<keyword id="KW-0676">Redox-active center</keyword>
<keyword id="KW-0862">Zinc</keyword>
<dbReference type="EMBL" id="CP000266">
    <property type="protein sequence ID" value="ABF05448.1"/>
    <property type="molecule type" value="Genomic_DNA"/>
</dbReference>
<dbReference type="RefSeq" id="WP_005052722.1">
    <property type="nucleotide sequence ID" value="NC_008258.1"/>
</dbReference>
<dbReference type="SMR" id="Q0SZR7"/>
<dbReference type="KEGG" id="sfv:SFV_3406"/>
<dbReference type="HOGENOM" id="CLU_054493_0_0_6"/>
<dbReference type="Proteomes" id="UP000000659">
    <property type="component" value="Chromosome"/>
</dbReference>
<dbReference type="GO" id="GO:0005737">
    <property type="term" value="C:cytoplasm"/>
    <property type="evidence" value="ECO:0007669"/>
    <property type="project" value="UniProtKB-SubCell"/>
</dbReference>
<dbReference type="GO" id="GO:0044183">
    <property type="term" value="F:protein folding chaperone"/>
    <property type="evidence" value="ECO:0007669"/>
    <property type="project" value="TreeGrafter"/>
</dbReference>
<dbReference type="GO" id="GO:0051082">
    <property type="term" value="F:unfolded protein binding"/>
    <property type="evidence" value="ECO:0007669"/>
    <property type="project" value="UniProtKB-UniRule"/>
</dbReference>
<dbReference type="GO" id="GO:0042026">
    <property type="term" value="P:protein refolding"/>
    <property type="evidence" value="ECO:0007669"/>
    <property type="project" value="TreeGrafter"/>
</dbReference>
<dbReference type="CDD" id="cd00498">
    <property type="entry name" value="Hsp33"/>
    <property type="match status" value="1"/>
</dbReference>
<dbReference type="FunFam" id="3.55.30.10:FF:000001">
    <property type="entry name" value="33 kDa chaperonin"/>
    <property type="match status" value="1"/>
</dbReference>
<dbReference type="Gene3D" id="1.10.287.480">
    <property type="entry name" value="helix hairpin bin"/>
    <property type="match status" value="1"/>
</dbReference>
<dbReference type="Gene3D" id="3.55.30.10">
    <property type="entry name" value="Hsp33 domain"/>
    <property type="match status" value="1"/>
</dbReference>
<dbReference type="Gene3D" id="3.90.1280.10">
    <property type="entry name" value="HSP33 redox switch-like"/>
    <property type="match status" value="1"/>
</dbReference>
<dbReference type="HAMAP" id="MF_00117">
    <property type="entry name" value="HslO"/>
    <property type="match status" value="1"/>
</dbReference>
<dbReference type="InterPro" id="IPR000397">
    <property type="entry name" value="Heat_shock_Hsp33"/>
</dbReference>
<dbReference type="InterPro" id="IPR016154">
    <property type="entry name" value="Heat_shock_Hsp33_C"/>
</dbReference>
<dbReference type="InterPro" id="IPR016153">
    <property type="entry name" value="Heat_shock_Hsp33_N"/>
</dbReference>
<dbReference type="InterPro" id="IPR023212">
    <property type="entry name" value="Hsp33_helix_hairpin_bin_dom_sf"/>
</dbReference>
<dbReference type="NCBIfam" id="NF001033">
    <property type="entry name" value="PRK00114.1"/>
    <property type="match status" value="1"/>
</dbReference>
<dbReference type="PANTHER" id="PTHR30111">
    <property type="entry name" value="33 KDA CHAPERONIN"/>
    <property type="match status" value="1"/>
</dbReference>
<dbReference type="PANTHER" id="PTHR30111:SF1">
    <property type="entry name" value="33 KDA CHAPERONIN"/>
    <property type="match status" value="1"/>
</dbReference>
<dbReference type="Pfam" id="PF01430">
    <property type="entry name" value="HSP33"/>
    <property type="match status" value="1"/>
</dbReference>
<dbReference type="PIRSF" id="PIRSF005261">
    <property type="entry name" value="Heat_shock_Hsp33"/>
    <property type="match status" value="1"/>
</dbReference>
<dbReference type="SUPFAM" id="SSF64397">
    <property type="entry name" value="Hsp33 domain"/>
    <property type="match status" value="1"/>
</dbReference>
<dbReference type="SUPFAM" id="SSF118352">
    <property type="entry name" value="HSP33 redox switch-like"/>
    <property type="match status" value="1"/>
</dbReference>